<evidence type="ECO:0000255" key="1">
    <source>
        <dbReference type="HAMAP-Rule" id="MF_00302"/>
    </source>
</evidence>
<sequence>MGKTNDWLDFDQLVEDSVRDALKPPSMYKVILVNDDYTPMEFVIDVLQKFFSYDVERATQLMLAVHYQGKAICGVFTAEVAETKVAMVNKYARENEHPLLCTLEKA</sequence>
<name>CLPS_SALPK</name>
<reference key="1">
    <citation type="journal article" date="2009" name="BMC Genomics">
        <title>Pseudogene accumulation in the evolutionary histories of Salmonella enterica serovars Paratyphi A and Typhi.</title>
        <authorList>
            <person name="Holt K.E."/>
            <person name="Thomson N.R."/>
            <person name="Wain J."/>
            <person name="Langridge G.C."/>
            <person name="Hasan R."/>
            <person name="Bhutta Z.A."/>
            <person name="Quail M.A."/>
            <person name="Norbertczak H."/>
            <person name="Walker D."/>
            <person name="Simmonds M."/>
            <person name="White B."/>
            <person name="Bason N."/>
            <person name="Mungall K."/>
            <person name="Dougan G."/>
            <person name="Parkhill J."/>
        </authorList>
    </citation>
    <scope>NUCLEOTIDE SEQUENCE [LARGE SCALE GENOMIC DNA]</scope>
    <source>
        <strain>AKU_12601</strain>
    </source>
</reference>
<protein>
    <recommendedName>
        <fullName evidence="1">ATP-dependent Clp protease adapter protein ClpS</fullName>
    </recommendedName>
</protein>
<gene>
    <name evidence="1" type="primary">clpS</name>
    <name type="ordered locus">SSPA1725</name>
</gene>
<organism>
    <name type="scientific">Salmonella paratyphi A (strain AKU_12601)</name>
    <dbReference type="NCBI Taxonomy" id="554290"/>
    <lineage>
        <taxon>Bacteria</taxon>
        <taxon>Pseudomonadati</taxon>
        <taxon>Pseudomonadota</taxon>
        <taxon>Gammaproteobacteria</taxon>
        <taxon>Enterobacterales</taxon>
        <taxon>Enterobacteriaceae</taxon>
        <taxon>Salmonella</taxon>
    </lineage>
</organism>
<proteinExistence type="inferred from homology"/>
<feature type="chain" id="PRO_1000115475" description="ATP-dependent Clp protease adapter protein ClpS">
    <location>
        <begin position="1"/>
        <end position="106"/>
    </location>
</feature>
<comment type="function">
    <text evidence="1">Involved in the modulation of the specificity of the ClpAP-mediated ATP-dependent protein degradation.</text>
</comment>
<comment type="subunit">
    <text evidence="1">Binds to the N-terminal domain of the chaperone ClpA.</text>
</comment>
<comment type="similarity">
    <text evidence="1">Belongs to the ClpS family.</text>
</comment>
<accession>B5BBT0</accession>
<dbReference type="EMBL" id="FM200053">
    <property type="protein sequence ID" value="CAR59919.1"/>
    <property type="molecule type" value="Genomic_DNA"/>
</dbReference>
<dbReference type="RefSeq" id="WP_000520789.1">
    <property type="nucleotide sequence ID" value="NC_011147.1"/>
</dbReference>
<dbReference type="SMR" id="B5BBT0"/>
<dbReference type="KEGG" id="sek:SSPA1725"/>
<dbReference type="HOGENOM" id="CLU_134358_2_1_6"/>
<dbReference type="Proteomes" id="UP000001869">
    <property type="component" value="Chromosome"/>
</dbReference>
<dbReference type="GO" id="GO:0030163">
    <property type="term" value="P:protein catabolic process"/>
    <property type="evidence" value="ECO:0007669"/>
    <property type="project" value="InterPro"/>
</dbReference>
<dbReference type="GO" id="GO:0006508">
    <property type="term" value="P:proteolysis"/>
    <property type="evidence" value="ECO:0007669"/>
    <property type="project" value="UniProtKB-UniRule"/>
</dbReference>
<dbReference type="FunFam" id="3.30.1390.10:FF:000002">
    <property type="entry name" value="ATP-dependent Clp protease adapter protein ClpS"/>
    <property type="match status" value="1"/>
</dbReference>
<dbReference type="Gene3D" id="3.30.1390.10">
    <property type="match status" value="1"/>
</dbReference>
<dbReference type="HAMAP" id="MF_00302">
    <property type="entry name" value="ClpS"/>
    <property type="match status" value="1"/>
</dbReference>
<dbReference type="InterPro" id="IPR022935">
    <property type="entry name" value="ClpS"/>
</dbReference>
<dbReference type="InterPro" id="IPR003769">
    <property type="entry name" value="ClpS_core"/>
</dbReference>
<dbReference type="InterPro" id="IPR014719">
    <property type="entry name" value="Ribosomal_bL12_C/ClpS-like"/>
</dbReference>
<dbReference type="NCBIfam" id="NF000670">
    <property type="entry name" value="PRK00033.1-3"/>
    <property type="match status" value="1"/>
</dbReference>
<dbReference type="NCBIfam" id="NF000672">
    <property type="entry name" value="PRK00033.1-5"/>
    <property type="match status" value="1"/>
</dbReference>
<dbReference type="PANTHER" id="PTHR33473:SF19">
    <property type="entry name" value="ATP-DEPENDENT CLP PROTEASE ADAPTER PROTEIN CLPS"/>
    <property type="match status" value="1"/>
</dbReference>
<dbReference type="PANTHER" id="PTHR33473">
    <property type="entry name" value="ATP-DEPENDENT CLP PROTEASE ADAPTER PROTEIN CLPS1, CHLOROPLASTIC"/>
    <property type="match status" value="1"/>
</dbReference>
<dbReference type="Pfam" id="PF02617">
    <property type="entry name" value="ClpS"/>
    <property type="match status" value="1"/>
</dbReference>
<dbReference type="SUPFAM" id="SSF54736">
    <property type="entry name" value="ClpS-like"/>
    <property type="match status" value="1"/>
</dbReference>